<sequence>DSPTPNTYNIYYGTAASAXN</sequence>
<dbReference type="Proteomes" id="UP001155700">
    <property type="component" value="Unplaced"/>
</dbReference>
<dbReference type="GO" id="GO:0009543">
    <property type="term" value="C:chloroplast thylakoid lumen"/>
    <property type="evidence" value="ECO:0007669"/>
    <property type="project" value="UniProtKB-SubCell"/>
</dbReference>
<proteinExistence type="evidence at protein level"/>
<comment type="subcellular location">
    <subcellularLocation>
        <location>Plastid</location>
        <location>Chloroplast thylakoid lumen</location>
    </subcellularLocation>
</comment>
<name>TL19_SPIOL</name>
<protein>
    <recommendedName>
        <fullName>Thylakoid lumenal 18.4 kDa protein</fullName>
    </recommendedName>
    <alternativeName>
        <fullName>P18.4</fullName>
    </alternativeName>
</protein>
<accession>P82799</accession>
<reference key="1">
    <citation type="submission" date="2000-07" db="UniProtKB">
        <authorList>
            <person name="Kieselbach T."/>
            <person name="Pettersson U."/>
            <person name="Bystedt M."/>
            <person name="Schroeder W.P."/>
        </authorList>
    </citation>
    <scope>PROTEIN SEQUENCE</scope>
</reference>
<feature type="chain" id="PRO_0000072558" description="Thylakoid lumenal 18.4 kDa protein">
    <location>
        <begin position="1"/>
        <end position="20" status="greater than"/>
    </location>
</feature>
<feature type="non-terminal residue">
    <location>
        <position position="20"/>
    </location>
</feature>
<organism>
    <name type="scientific">Spinacia oleracea</name>
    <name type="common">Spinach</name>
    <dbReference type="NCBI Taxonomy" id="3562"/>
    <lineage>
        <taxon>Eukaryota</taxon>
        <taxon>Viridiplantae</taxon>
        <taxon>Streptophyta</taxon>
        <taxon>Embryophyta</taxon>
        <taxon>Tracheophyta</taxon>
        <taxon>Spermatophyta</taxon>
        <taxon>Magnoliopsida</taxon>
        <taxon>eudicotyledons</taxon>
        <taxon>Gunneridae</taxon>
        <taxon>Pentapetalae</taxon>
        <taxon>Caryophyllales</taxon>
        <taxon>Chenopodiaceae</taxon>
        <taxon>Chenopodioideae</taxon>
        <taxon>Anserineae</taxon>
        <taxon>Spinacia</taxon>
    </lineage>
</organism>
<keyword id="KW-0150">Chloroplast</keyword>
<keyword id="KW-0903">Direct protein sequencing</keyword>
<keyword id="KW-0934">Plastid</keyword>
<keyword id="KW-1185">Reference proteome</keyword>
<keyword id="KW-0793">Thylakoid</keyword>